<dbReference type="EC" id="1.3.1.98" evidence="1"/>
<dbReference type="EMBL" id="AM406671">
    <property type="protein sequence ID" value="CAL97920.1"/>
    <property type="molecule type" value="Genomic_DNA"/>
</dbReference>
<dbReference type="RefSeq" id="WP_011835202.1">
    <property type="nucleotide sequence ID" value="NC_009004.1"/>
</dbReference>
<dbReference type="SMR" id="A2RKV4"/>
<dbReference type="STRING" id="416870.llmg_1329"/>
<dbReference type="GeneID" id="61109410"/>
<dbReference type="KEGG" id="llm:llmg_1329"/>
<dbReference type="eggNOG" id="COG0812">
    <property type="taxonomic scope" value="Bacteria"/>
</dbReference>
<dbReference type="HOGENOM" id="CLU_035304_1_1_9"/>
<dbReference type="OrthoDB" id="9804753at2"/>
<dbReference type="PhylomeDB" id="A2RKV4"/>
<dbReference type="UniPathway" id="UPA00219"/>
<dbReference type="Proteomes" id="UP000000364">
    <property type="component" value="Chromosome"/>
</dbReference>
<dbReference type="GO" id="GO:0005829">
    <property type="term" value="C:cytosol"/>
    <property type="evidence" value="ECO:0007669"/>
    <property type="project" value="TreeGrafter"/>
</dbReference>
<dbReference type="GO" id="GO:0071949">
    <property type="term" value="F:FAD binding"/>
    <property type="evidence" value="ECO:0007669"/>
    <property type="project" value="InterPro"/>
</dbReference>
<dbReference type="GO" id="GO:0008762">
    <property type="term" value="F:UDP-N-acetylmuramate dehydrogenase activity"/>
    <property type="evidence" value="ECO:0007669"/>
    <property type="project" value="UniProtKB-UniRule"/>
</dbReference>
<dbReference type="GO" id="GO:0051301">
    <property type="term" value="P:cell division"/>
    <property type="evidence" value="ECO:0007669"/>
    <property type="project" value="UniProtKB-KW"/>
</dbReference>
<dbReference type="GO" id="GO:0071555">
    <property type="term" value="P:cell wall organization"/>
    <property type="evidence" value="ECO:0007669"/>
    <property type="project" value="UniProtKB-KW"/>
</dbReference>
<dbReference type="GO" id="GO:0009252">
    <property type="term" value="P:peptidoglycan biosynthetic process"/>
    <property type="evidence" value="ECO:0007669"/>
    <property type="project" value="UniProtKB-UniRule"/>
</dbReference>
<dbReference type="GO" id="GO:0008360">
    <property type="term" value="P:regulation of cell shape"/>
    <property type="evidence" value="ECO:0007669"/>
    <property type="project" value="UniProtKB-KW"/>
</dbReference>
<dbReference type="Gene3D" id="3.30.465.10">
    <property type="match status" value="1"/>
</dbReference>
<dbReference type="Gene3D" id="3.90.78.10">
    <property type="entry name" value="UDP-N-acetylenolpyruvoylglucosamine reductase, C-terminal domain"/>
    <property type="match status" value="1"/>
</dbReference>
<dbReference type="Gene3D" id="3.30.43.10">
    <property type="entry name" value="Uridine Diphospho-n-acetylenolpyruvylglucosamine Reductase, domain 2"/>
    <property type="match status" value="1"/>
</dbReference>
<dbReference type="HAMAP" id="MF_00037">
    <property type="entry name" value="MurB"/>
    <property type="match status" value="1"/>
</dbReference>
<dbReference type="InterPro" id="IPR016166">
    <property type="entry name" value="FAD-bd_PCMH"/>
</dbReference>
<dbReference type="InterPro" id="IPR036318">
    <property type="entry name" value="FAD-bd_PCMH-like_sf"/>
</dbReference>
<dbReference type="InterPro" id="IPR016167">
    <property type="entry name" value="FAD-bd_PCMH_sub1"/>
</dbReference>
<dbReference type="InterPro" id="IPR016169">
    <property type="entry name" value="FAD-bd_PCMH_sub2"/>
</dbReference>
<dbReference type="InterPro" id="IPR003170">
    <property type="entry name" value="MurB"/>
</dbReference>
<dbReference type="InterPro" id="IPR011601">
    <property type="entry name" value="MurB_C"/>
</dbReference>
<dbReference type="InterPro" id="IPR036635">
    <property type="entry name" value="MurB_C_sf"/>
</dbReference>
<dbReference type="InterPro" id="IPR006094">
    <property type="entry name" value="Oxid_FAD_bind_N"/>
</dbReference>
<dbReference type="NCBIfam" id="TIGR00179">
    <property type="entry name" value="murB"/>
    <property type="match status" value="1"/>
</dbReference>
<dbReference type="NCBIfam" id="NF010480">
    <property type="entry name" value="PRK13905.1"/>
    <property type="match status" value="1"/>
</dbReference>
<dbReference type="PANTHER" id="PTHR21071">
    <property type="entry name" value="UDP-N-ACETYLENOLPYRUVOYLGLUCOSAMINE REDUCTASE"/>
    <property type="match status" value="1"/>
</dbReference>
<dbReference type="PANTHER" id="PTHR21071:SF4">
    <property type="entry name" value="UDP-N-ACETYLENOLPYRUVOYLGLUCOSAMINE REDUCTASE"/>
    <property type="match status" value="1"/>
</dbReference>
<dbReference type="Pfam" id="PF01565">
    <property type="entry name" value="FAD_binding_4"/>
    <property type="match status" value="1"/>
</dbReference>
<dbReference type="Pfam" id="PF02873">
    <property type="entry name" value="MurB_C"/>
    <property type="match status" value="1"/>
</dbReference>
<dbReference type="SUPFAM" id="SSF56176">
    <property type="entry name" value="FAD-binding/transporter-associated domain-like"/>
    <property type="match status" value="1"/>
</dbReference>
<dbReference type="SUPFAM" id="SSF56194">
    <property type="entry name" value="Uridine diphospho-N-Acetylenolpyruvylglucosamine reductase, MurB, C-terminal domain"/>
    <property type="match status" value="1"/>
</dbReference>
<dbReference type="PROSITE" id="PS51387">
    <property type="entry name" value="FAD_PCMH"/>
    <property type="match status" value="1"/>
</dbReference>
<organism>
    <name type="scientific">Lactococcus lactis subsp. cremoris (strain MG1363)</name>
    <dbReference type="NCBI Taxonomy" id="416870"/>
    <lineage>
        <taxon>Bacteria</taxon>
        <taxon>Bacillati</taxon>
        <taxon>Bacillota</taxon>
        <taxon>Bacilli</taxon>
        <taxon>Lactobacillales</taxon>
        <taxon>Streptococcaceae</taxon>
        <taxon>Lactococcus</taxon>
        <taxon>Lactococcus cremoris subsp. cremoris</taxon>
    </lineage>
</organism>
<protein>
    <recommendedName>
        <fullName evidence="1">UDP-N-acetylenolpyruvoylglucosamine reductase</fullName>
        <ecNumber evidence="1">1.3.1.98</ecNumber>
    </recommendedName>
    <alternativeName>
        <fullName evidence="1">UDP-N-acetylmuramate dehydrogenase</fullName>
    </alternativeName>
</protein>
<gene>
    <name evidence="1" type="primary">murB</name>
    <name type="ordered locus">llmg_1329</name>
</gene>
<accession>A2RKV4</accession>
<name>MURB_LACLM</name>
<comment type="function">
    <text evidence="1">Cell wall formation.</text>
</comment>
<comment type="catalytic activity">
    <reaction evidence="1">
        <text>UDP-N-acetyl-alpha-D-muramate + NADP(+) = UDP-N-acetyl-3-O-(1-carboxyvinyl)-alpha-D-glucosamine + NADPH + H(+)</text>
        <dbReference type="Rhea" id="RHEA:12248"/>
        <dbReference type="ChEBI" id="CHEBI:15378"/>
        <dbReference type="ChEBI" id="CHEBI:57783"/>
        <dbReference type="ChEBI" id="CHEBI:58349"/>
        <dbReference type="ChEBI" id="CHEBI:68483"/>
        <dbReference type="ChEBI" id="CHEBI:70757"/>
        <dbReference type="EC" id="1.3.1.98"/>
    </reaction>
</comment>
<comment type="cofactor">
    <cofactor evidence="1">
        <name>FAD</name>
        <dbReference type="ChEBI" id="CHEBI:57692"/>
    </cofactor>
</comment>
<comment type="pathway">
    <text evidence="1">Cell wall biogenesis; peptidoglycan biosynthesis.</text>
</comment>
<comment type="subcellular location">
    <subcellularLocation>
        <location evidence="1">Cytoplasm</location>
    </subcellularLocation>
</comment>
<evidence type="ECO:0000255" key="1">
    <source>
        <dbReference type="HAMAP-Rule" id="MF_00037"/>
    </source>
</evidence>
<sequence length="299" mass="32045">MIKETDLENIPDLLIKFNEPLSNYTYTKVGGPADILAFPATIEALTELSAKAKATDTPVTVLGNASNLIVRDGGIRGLVILLEKLDSVKVAGYTIEAQAGAKLKEVTQVAQANSLTGFEFACGIPGSIGGAVFMNAGAYGGEISQVLVSCKVMDAEGNVSVLSASEMQFGYRHSVIRDKNLIVLSAKFELQAGDPTQIQNEMDRLNFLRESKQPLEYPSCGSVFKRPVGHFAGQLIQEAKLQGQRIGGVEVSKKHAGFMVNVADGNATDYEKLIALVIEKVKENSGVTLEPEVRIIGEK</sequence>
<reference key="1">
    <citation type="journal article" date="2007" name="J. Bacteriol.">
        <title>The complete genome sequence of the lactic acid bacterial paradigm Lactococcus lactis subsp. cremoris MG1363.</title>
        <authorList>
            <person name="Wegmann U."/>
            <person name="O'Connell-Motherway M."/>
            <person name="Zomer A."/>
            <person name="Buist G."/>
            <person name="Shearman C."/>
            <person name="Canchaya C."/>
            <person name="Ventura M."/>
            <person name="Goesmann A."/>
            <person name="Gasson M.J."/>
            <person name="Kuipers O.P."/>
            <person name="van Sinderen D."/>
            <person name="Kok J."/>
        </authorList>
    </citation>
    <scope>NUCLEOTIDE SEQUENCE [LARGE SCALE GENOMIC DNA]</scope>
    <source>
        <strain>MG1363</strain>
    </source>
</reference>
<keyword id="KW-0131">Cell cycle</keyword>
<keyword id="KW-0132">Cell division</keyword>
<keyword id="KW-0133">Cell shape</keyword>
<keyword id="KW-0961">Cell wall biogenesis/degradation</keyword>
<keyword id="KW-0963">Cytoplasm</keyword>
<keyword id="KW-0274">FAD</keyword>
<keyword id="KW-0285">Flavoprotein</keyword>
<keyword id="KW-0521">NADP</keyword>
<keyword id="KW-0560">Oxidoreductase</keyword>
<keyword id="KW-0573">Peptidoglycan synthesis</keyword>
<feature type="chain" id="PRO_0000332466" description="UDP-N-acetylenolpyruvoylglucosamine reductase">
    <location>
        <begin position="1"/>
        <end position="299"/>
    </location>
</feature>
<feature type="domain" description="FAD-binding PCMH-type" evidence="1">
    <location>
        <begin position="28"/>
        <end position="193"/>
    </location>
</feature>
<feature type="active site" evidence="1">
    <location>
        <position position="172"/>
    </location>
</feature>
<feature type="active site" description="Proton donor" evidence="1">
    <location>
        <position position="222"/>
    </location>
</feature>
<feature type="active site" evidence="1">
    <location>
        <position position="292"/>
    </location>
</feature>
<proteinExistence type="inferred from homology"/>